<protein>
    <recommendedName>
        <fullName>Non-structural polyprotein 1A</fullName>
    </recommendedName>
    <component>
        <recommendedName>
            <fullName>Protein p19</fullName>
        </recommendedName>
    </component>
    <component>
        <recommendedName>
            <fullName>Transmembrane protein 1A</fullName>
        </recommendedName>
    </component>
    <component>
        <recommendedName>
            <fullName>Serine protease p27</fullName>
            <shortName>p27</shortName>
            <ecNumber evidence="2">3.4.21.-</ecNumber>
        </recommendedName>
    </component>
    <component>
        <recommendedName>
            <fullName>Viral genome-linked protein</fullName>
        </recommendedName>
        <alternativeName>
            <fullName>VPg</fullName>
        </alternativeName>
    </component>
    <component>
        <recommendedName>
            <fullName>Protein p20'</fullName>
        </recommendedName>
    </component>
</protein>
<comment type="function">
    <molecule>Serine protease p27</molecule>
    <text evidence="2">Responsible for the cleavage of the polyprotein into functional products.</text>
</comment>
<comment type="function">
    <molecule>Viral genome-linked protein</molecule>
    <text evidence="3">Protein covalently attached to the 5' extremity of the genomic and subgenomic RNAs (By similarity). It may serve as a primer for the replicase (By similarity).</text>
</comment>
<comment type="catalytic activity">
    <reaction>
        <text>RNA(n) + a ribonucleoside 5'-triphosphate = RNA(n+1) + diphosphate</text>
        <dbReference type="Rhea" id="RHEA:21248"/>
        <dbReference type="Rhea" id="RHEA-COMP:14527"/>
        <dbReference type="Rhea" id="RHEA-COMP:17342"/>
        <dbReference type="ChEBI" id="CHEBI:33019"/>
        <dbReference type="ChEBI" id="CHEBI:61557"/>
        <dbReference type="ChEBI" id="CHEBI:140395"/>
    </reaction>
</comment>
<comment type="subunit">
    <molecule>Serine protease p27</molecule>
    <text evidence="2">Monomer.</text>
</comment>
<comment type="subcellular location">
    <molecule>Transmembrane protein 1A</molecule>
    <subcellularLocation>
        <location evidence="6">Host membrane</location>
        <topology evidence="6">Multi-pass membrane protein</topology>
    </subcellularLocation>
</comment>
<comment type="alternative products">
    <event type="ribosomal frameshifting"/>
    <isoform>
        <id>Q9JH67-1</id>
        <name>nsp1a</name>
        <sequence type="displayed"/>
    </isoform>
    <isoform>
        <id>Q9JH66-1</id>
        <name>nsp1ab</name>
        <sequence type="external"/>
    </isoform>
</comment>
<comment type="PTM">
    <text evidence="2">Cleaved by the viral and host proteases (By similarity). The protease is probably autocatalytically cleaved (By similarity).</text>
</comment>
<comment type="similarity">
    <text evidence="6">Belongs to the astroviridae polyprotein 1A family.</text>
</comment>
<feature type="chain" id="PRO_0000327350" description="Non-structural polyprotein 1A">
    <location>
        <begin position="1"/>
        <end position="844"/>
    </location>
</feature>
<feature type="chain" id="PRO_0000327351" description="Protein p19" evidence="4">
    <location>
        <begin position="1"/>
        <end position="172"/>
    </location>
</feature>
<feature type="chain" id="PRO_0000327352" description="Transmembrane protein 1A" evidence="4">
    <location>
        <begin position="173"/>
        <end position="407"/>
    </location>
</feature>
<feature type="chain" id="PRO_0000327353" description="Serine protease p27" evidence="4">
    <location>
        <begin position="408"/>
        <end position="640"/>
    </location>
</feature>
<feature type="chain" id="PRO_0000419600" description="Viral genome-linked protein" evidence="4">
    <location>
        <begin position="641"/>
        <end position="721"/>
    </location>
</feature>
<feature type="chain" id="PRO_0000327354" description="Protein p20'" evidence="4">
    <location>
        <begin position="722"/>
        <end position="844"/>
    </location>
</feature>
<feature type="transmembrane region" description="Helical" evidence="4">
    <location>
        <begin position="231"/>
        <end position="251"/>
    </location>
</feature>
<feature type="transmembrane region" description="Helical" evidence="4">
    <location>
        <begin position="257"/>
        <end position="277"/>
    </location>
</feature>
<feature type="transmembrane region" description="Helical" evidence="4">
    <location>
        <begin position="304"/>
        <end position="324"/>
    </location>
</feature>
<feature type="transmembrane region" description="Helical" evidence="4">
    <location>
        <begin position="337"/>
        <end position="357"/>
    </location>
</feature>
<feature type="region of interest" description="Disordered" evidence="5">
    <location>
        <begin position="687"/>
        <end position="708"/>
    </location>
</feature>
<feature type="region of interest" description="Disordered" evidence="5">
    <location>
        <begin position="822"/>
        <end position="844"/>
    </location>
</feature>
<feature type="coiled-coil region" evidence="4">
    <location>
        <begin position="109"/>
        <end position="143"/>
    </location>
</feature>
<feature type="compositionally biased region" description="Acidic residues" evidence="5">
    <location>
        <begin position="687"/>
        <end position="699"/>
    </location>
</feature>
<feature type="active site" description="Charge relay system; for serine protease activity" evidence="1">
    <location>
        <position position="452"/>
    </location>
</feature>
<feature type="active site" description="Charge relay system; for serine protease activity" evidence="1">
    <location>
        <position position="481"/>
    </location>
</feature>
<feature type="active site" description="Charge relay system; for serine protease activity" evidence="1">
    <location>
        <position position="544"/>
    </location>
</feature>
<feature type="site" description="Cleavage" evidence="4">
    <location>
        <begin position="172"/>
        <end position="173"/>
    </location>
</feature>
<feature type="site" description="Cleavage" evidence="4">
    <location>
        <begin position="407"/>
        <end position="408"/>
    </location>
</feature>
<feature type="site" description="Cleavage" evidence="2">
    <location>
        <begin position="640"/>
        <end position="641"/>
    </location>
</feature>
<feature type="site" description="Cleavage" evidence="4">
    <location>
        <begin position="721"/>
        <end position="722"/>
    </location>
</feature>
<feature type="modified residue" description="O-(5'-phospho-RNA)-tyrosine" evidence="3">
    <location>
        <position position="662"/>
    </location>
</feature>
<evidence type="ECO:0000250" key="1"/>
<evidence type="ECO:0000250" key="2">
    <source>
        <dbReference type="UniProtKB" id="P0C6K4"/>
    </source>
</evidence>
<evidence type="ECO:0000250" key="3">
    <source>
        <dbReference type="UniProtKB" id="Q3ZN07"/>
    </source>
</evidence>
<evidence type="ECO:0000255" key="4"/>
<evidence type="ECO:0000256" key="5">
    <source>
        <dbReference type="SAM" id="MobiDB-lite"/>
    </source>
</evidence>
<evidence type="ECO:0000305" key="6"/>
<name>NS1A_OASV1</name>
<dbReference type="EC" id="3.4.21.-" evidence="2"/>
<dbReference type="EMBL" id="Y15937">
    <property type="protein sequence ID" value="CAB95002.1"/>
    <property type="molecule type" value="Genomic_RNA"/>
</dbReference>
<dbReference type="RefSeq" id="NP_059944.1">
    <molecule id="Q9JH67-1"/>
    <property type="nucleotide sequence ID" value="NC_002469.1"/>
</dbReference>
<dbReference type="SMR" id="Q9JH67"/>
<dbReference type="Proteomes" id="UP000007786">
    <property type="component" value="Genome"/>
</dbReference>
<dbReference type="GO" id="GO:0033644">
    <property type="term" value="C:host cell membrane"/>
    <property type="evidence" value="ECO:0007669"/>
    <property type="project" value="UniProtKB-SubCell"/>
</dbReference>
<dbReference type="GO" id="GO:0016020">
    <property type="term" value="C:membrane"/>
    <property type="evidence" value="ECO:0007669"/>
    <property type="project" value="UniProtKB-KW"/>
</dbReference>
<dbReference type="GO" id="GO:0034062">
    <property type="term" value="F:5'-3' RNA polymerase activity"/>
    <property type="evidence" value="ECO:0007669"/>
    <property type="project" value="RHEA"/>
</dbReference>
<dbReference type="GO" id="GO:0008236">
    <property type="term" value="F:serine-type peptidase activity"/>
    <property type="evidence" value="ECO:0007669"/>
    <property type="project" value="UniProtKB-KW"/>
</dbReference>
<dbReference type="GO" id="GO:0006508">
    <property type="term" value="P:proteolysis"/>
    <property type="evidence" value="ECO:0007669"/>
    <property type="project" value="UniProtKB-KW"/>
</dbReference>
<dbReference type="GO" id="GO:0075523">
    <property type="term" value="P:viral translational frameshifting"/>
    <property type="evidence" value="ECO:0007669"/>
    <property type="project" value="UniProtKB-KW"/>
</dbReference>
<dbReference type="CDD" id="cd14686">
    <property type="entry name" value="bZIP"/>
    <property type="match status" value="1"/>
</dbReference>
<dbReference type="Gene3D" id="2.40.10.10">
    <property type="entry name" value="Trypsin-like serine proteases"/>
    <property type="match status" value="2"/>
</dbReference>
<dbReference type="InterPro" id="IPR045835">
    <property type="entry name" value="Astro_1A"/>
</dbReference>
<dbReference type="InterPro" id="IPR009003">
    <property type="entry name" value="Peptidase_S1_PA"/>
</dbReference>
<dbReference type="InterPro" id="IPR043504">
    <property type="entry name" value="Peptidase_S1_PA_chymotrypsin"/>
</dbReference>
<dbReference type="Pfam" id="PF19415">
    <property type="entry name" value="Astro_1A"/>
    <property type="match status" value="1"/>
</dbReference>
<dbReference type="Pfam" id="PF13365">
    <property type="entry name" value="Trypsin_2"/>
    <property type="match status" value="1"/>
</dbReference>
<dbReference type="SUPFAM" id="SSF50494">
    <property type="entry name" value="Trypsin-like serine proteases"/>
    <property type="match status" value="1"/>
</dbReference>
<organism>
    <name type="scientific">Ovine astrovirus 1</name>
    <name type="common">OAstV-1</name>
    <dbReference type="NCBI Taxonomy" id="1239577"/>
    <lineage>
        <taxon>Viruses</taxon>
        <taxon>Riboviria</taxon>
        <taxon>Orthornavirae</taxon>
        <taxon>Pisuviricota</taxon>
        <taxon>Stelpaviricetes</taxon>
        <taxon>Stellavirales</taxon>
        <taxon>Astroviridae</taxon>
        <taxon>Mamastrovirus</taxon>
    </lineage>
</organism>
<gene>
    <name type="primary">ORF1</name>
</gene>
<sequence length="844" mass="95455">MNVYDKVLQFGSKKARARGMALNKLSRNRLEDIYAGSGPLVFGFGPIDMVDPGSLNPSIKTLDTVYVAAVQPDNQYVVHHFVPGRNEWVETDASTHQPTALVGVLVQDHKAKTREVEDLKSQLSQLRMEHEILRHEYERLKLKSPIVKPFKPLKVLLFSLLLGLLFAGVTNGARTGTCYAYDEEKDTCLYWEWKDSREVAWYDSYVTEALAIYNRACVYVRSKEFMTYLSLVFQTVFNWYFCATALAVYYMARAENPIVMFVTLALATLSQFQLLAVAVLPLLDFSATMGLWLSMVVFYMSQQISILVSFCVLVLSVMIGTFMADSEYAMMIKGHAVVFAIVCYSHVAMILNIPPWVVSLTMVCYRLWRVCFVFPAERLEIRSADGKVLHTVPTHPNWTAKVTRFVQSLRKGLRTSVAPTARIVPDGIAIVEAREGVGTCFRVKNNLVTSKHVVGSDDAVKIRWGAQEDMARVTYRHPTKDIALMALPTNLQTMPAYKFAKAITDGPIVMTAFDEANLLLVAVTEGVRVEDHMTYSVATRNGMSGAPITTVDGRVIAVHQTNTGFTGGAVIFVPEDIPEVRKISKREQELEDRVKQLEGMLNMDQAYVDSNLIVDLVREAVQREMKVLRTELANLGGFSQKKKGKNKSTKRKRKAVWTEEEYKAMLEKGFTRDQLRIMADAIRDQYYDDEDEQSEEEAGYPDWSDPGDSTDIENEWFGYEQSWKELEPAKSGVVVNTLPKDLVFKYSLDNYPISKQDIQAVAKELKIYEKAISDIISTSVSTDGKWKDDVDAQKILQELDGLWWGINHTLWEHGLMPFTQRRKRVQQPKNSKGALKTRAPKSAN</sequence>
<reference key="1">
    <citation type="journal article" date="2003" name="Virus Res.">
        <title>Complete genomic sequences of astroviruses from sheep and turkey: comparison with related viruses.</title>
        <authorList>
            <person name="Jonassen C.M."/>
            <person name="Jonassen T.O."/>
            <person name="Sveen T.M."/>
            <person name="Grinde B."/>
        </authorList>
    </citation>
    <scope>NUCLEOTIDE SEQUENCE [GENOMIC RNA]</scope>
</reference>
<proteinExistence type="inferred from homology"/>
<keyword id="KW-0175">Coiled coil</keyword>
<keyword id="KW-0191">Covalent protein-RNA linkage</keyword>
<keyword id="KW-1043">Host membrane</keyword>
<keyword id="KW-0378">Hydrolase</keyword>
<keyword id="KW-0472">Membrane</keyword>
<keyword id="KW-0597">Phosphoprotein</keyword>
<keyword id="KW-0645">Protease</keyword>
<keyword id="KW-0688">Ribosomal frameshifting</keyword>
<keyword id="KW-0720">Serine protease</keyword>
<keyword id="KW-0812">Transmembrane</keyword>
<keyword id="KW-1133">Transmembrane helix</keyword>
<keyword id="KW-0693">Viral RNA replication</keyword>
<organismHost>
    <name type="scientific">Ovis aries</name>
    <name type="common">Sheep</name>
    <dbReference type="NCBI Taxonomy" id="9940"/>
</organismHost>
<accession>Q9JH67</accession>